<accession>Q09730</accession>
<protein>
    <recommendedName>
        <fullName>Protein transport protein sft1</fullName>
    </recommendedName>
</protein>
<comment type="function">
    <text evidence="1">Vesicle SNARE required for retrograde transport within the Golgi complex.</text>
</comment>
<comment type="subunit">
    <text>Component of a SNARE complex consisting of sed5, gos1, ykt6 and sft1.</text>
</comment>
<comment type="subcellular location">
    <subcellularLocation>
        <location evidence="1">Golgi apparatus membrane</location>
        <topology evidence="1">Single-pass type IV membrane protein</topology>
    </subcellularLocation>
</comment>
<sequence length="91" mass="10542">MNDQNERRLETLSGQVSSLKNVTYDIYSRANDYTRIDRATESFSGLSNSVKKSTENFFRVVRSAGRRRIMTMVLAIVGSILIIYYASKWFF</sequence>
<evidence type="ECO:0000250" key="1"/>
<evidence type="ECO:0000255" key="2"/>
<feature type="chain" id="PRO_0000097711" description="Protein transport protein sft1">
    <location>
        <begin position="1"/>
        <end position="91"/>
    </location>
</feature>
<feature type="topological domain" description="Cytoplasmic" evidence="2">
    <location>
        <begin position="1"/>
        <end position="68"/>
    </location>
</feature>
<feature type="transmembrane region" description="Helical; Anchor for type IV membrane protein" evidence="2">
    <location>
        <begin position="69"/>
        <end position="86"/>
    </location>
</feature>
<feature type="topological domain" description="Lumenal" evidence="2">
    <location>
        <begin position="87"/>
        <end position="91"/>
    </location>
</feature>
<organism>
    <name type="scientific">Schizosaccharomyces pombe (strain 972 / ATCC 24843)</name>
    <name type="common">Fission yeast</name>
    <dbReference type="NCBI Taxonomy" id="284812"/>
    <lineage>
        <taxon>Eukaryota</taxon>
        <taxon>Fungi</taxon>
        <taxon>Dikarya</taxon>
        <taxon>Ascomycota</taxon>
        <taxon>Taphrinomycotina</taxon>
        <taxon>Schizosaccharomycetes</taxon>
        <taxon>Schizosaccharomycetales</taxon>
        <taxon>Schizosaccharomycetaceae</taxon>
        <taxon>Schizosaccharomyces</taxon>
    </lineage>
</organism>
<keyword id="KW-0333">Golgi apparatus</keyword>
<keyword id="KW-0472">Membrane</keyword>
<keyword id="KW-0653">Protein transport</keyword>
<keyword id="KW-1185">Reference proteome</keyword>
<keyword id="KW-0812">Transmembrane</keyword>
<keyword id="KW-1133">Transmembrane helix</keyword>
<keyword id="KW-0813">Transport</keyword>
<dbReference type="EMBL" id="CU329670">
    <property type="protein sequence ID" value="CAA90471.1"/>
    <property type="molecule type" value="Genomic_DNA"/>
</dbReference>
<dbReference type="PIR" id="T38611">
    <property type="entry name" value="S59647"/>
</dbReference>
<dbReference type="RefSeq" id="NP_592925.1">
    <property type="nucleotide sequence ID" value="NM_001018326.2"/>
</dbReference>
<dbReference type="SMR" id="Q09730"/>
<dbReference type="BioGRID" id="279040">
    <property type="interactions" value="47"/>
</dbReference>
<dbReference type="FunCoup" id="Q09730">
    <property type="interactions" value="15"/>
</dbReference>
<dbReference type="STRING" id="284812.Q09730"/>
<dbReference type="iPTMnet" id="Q09730"/>
<dbReference type="PaxDb" id="4896-SPAC31A2.13c.1"/>
<dbReference type="EnsemblFungi" id="SPAC31A2.13c.1">
    <property type="protein sequence ID" value="SPAC31A2.13c.1:pep"/>
    <property type="gene ID" value="SPAC31A2.13c"/>
</dbReference>
<dbReference type="GeneID" id="2542585"/>
<dbReference type="KEGG" id="spo:2542585"/>
<dbReference type="PomBase" id="SPAC31A2.13c">
    <property type="gene designation" value="sft1"/>
</dbReference>
<dbReference type="VEuPathDB" id="FungiDB:SPAC31A2.13c"/>
<dbReference type="eggNOG" id="ENOG502S73N">
    <property type="taxonomic scope" value="Eukaryota"/>
</dbReference>
<dbReference type="HOGENOM" id="CLU_150783_2_1_1"/>
<dbReference type="InParanoid" id="Q09730"/>
<dbReference type="OMA" id="MNDSNER"/>
<dbReference type="PhylomeDB" id="Q09730"/>
<dbReference type="Reactome" id="R-SPO-6807878">
    <property type="pathway name" value="COPI-mediated anterograde transport"/>
</dbReference>
<dbReference type="Reactome" id="R-SPO-6811438">
    <property type="pathway name" value="Intra-Golgi traffic"/>
</dbReference>
<dbReference type="PRO" id="PR:Q09730"/>
<dbReference type="Proteomes" id="UP000002485">
    <property type="component" value="Chromosome I"/>
</dbReference>
<dbReference type="GO" id="GO:0005737">
    <property type="term" value="C:cytoplasm"/>
    <property type="evidence" value="ECO:0007005"/>
    <property type="project" value="PomBase"/>
</dbReference>
<dbReference type="GO" id="GO:0005783">
    <property type="term" value="C:endoplasmic reticulum"/>
    <property type="evidence" value="ECO:0007005"/>
    <property type="project" value="PomBase"/>
</dbReference>
<dbReference type="GO" id="GO:0005794">
    <property type="term" value="C:Golgi apparatus"/>
    <property type="evidence" value="ECO:0007005"/>
    <property type="project" value="PomBase"/>
</dbReference>
<dbReference type="GO" id="GO:0000139">
    <property type="term" value="C:Golgi membrane"/>
    <property type="evidence" value="ECO:0000266"/>
    <property type="project" value="PomBase"/>
</dbReference>
<dbReference type="GO" id="GO:0005484">
    <property type="term" value="F:SNAP receptor activity"/>
    <property type="evidence" value="ECO:0000266"/>
    <property type="project" value="PomBase"/>
</dbReference>
<dbReference type="GO" id="GO:0006891">
    <property type="term" value="P:intra-Golgi vesicle-mediated transport"/>
    <property type="evidence" value="ECO:0000318"/>
    <property type="project" value="GO_Central"/>
</dbReference>
<dbReference type="GO" id="GO:0006886">
    <property type="term" value="P:intracellular protein transport"/>
    <property type="evidence" value="ECO:0000305"/>
    <property type="project" value="PomBase"/>
</dbReference>
<dbReference type="CDD" id="cd15853">
    <property type="entry name" value="SNARE_Bet1"/>
    <property type="match status" value="1"/>
</dbReference>
<dbReference type="InterPro" id="IPR039899">
    <property type="entry name" value="BET1_SNARE"/>
</dbReference>
<dbReference type="PANTHER" id="PTHR12791">
    <property type="entry name" value="GOLGI SNARE BET1-RELATED"/>
    <property type="match status" value="1"/>
</dbReference>
<gene>
    <name type="primary">sft1</name>
    <name type="ORF">SPAC31A2.13c</name>
</gene>
<proteinExistence type="inferred from homology"/>
<name>SFT1_SCHPO</name>
<reference key="1">
    <citation type="journal article" date="2002" name="Nature">
        <title>The genome sequence of Schizosaccharomyces pombe.</title>
        <authorList>
            <person name="Wood V."/>
            <person name="Gwilliam R."/>
            <person name="Rajandream M.A."/>
            <person name="Lyne M.H."/>
            <person name="Lyne R."/>
            <person name="Stewart A."/>
            <person name="Sgouros J.G."/>
            <person name="Peat N."/>
            <person name="Hayles J."/>
            <person name="Baker S.G."/>
            <person name="Basham D."/>
            <person name="Bowman S."/>
            <person name="Brooks K."/>
            <person name="Brown D."/>
            <person name="Brown S."/>
            <person name="Chillingworth T."/>
            <person name="Churcher C.M."/>
            <person name="Collins M."/>
            <person name="Connor R."/>
            <person name="Cronin A."/>
            <person name="Davis P."/>
            <person name="Feltwell T."/>
            <person name="Fraser A."/>
            <person name="Gentles S."/>
            <person name="Goble A."/>
            <person name="Hamlin N."/>
            <person name="Harris D.E."/>
            <person name="Hidalgo J."/>
            <person name="Hodgson G."/>
            <person name="Holroyd S."/>
            <person name="Hornsby T."/>
            <person name="Howarth S."/>
            <person name="Huckle E.J."/>
            <person name="Hunt S."/>
            <person name="Jagels K."/>
            <person name="James K.D."/>
            <person name="Jones L."/>
            <person name="Jones M."/>
            <person name="Leather S."/>
            <person name="McDonald S."/>
            <person name="McLean J."/>
            <person name="Mooney P."/>
            <person name="Moule S."/>
            <person name="Mungall K.L."/>
            <person name="Murphy L.D."/>
            <person name="Niblett D."/>
            <person name="Odell C."/>
            <person name="Oliver K."/>
            <person name="O'Neil S."/>
            <person name="Pearson D."/>
            <person name="Quail M.A."/>
            <person name="Rabbinowitsch E."/>
            <person name="Rutherford K.M."/>
            <person name="Rutter S."/>
            <person name="Saunders D."/>
            <person name="Seeger K."/>
            <person name="Sharp S."/>
            <person name="Skelton J."/>
            <person name="Simmonds M.N."/>
            <person name="Squares R."/>
            <person name="Squares S."/>
            <person name="Stevens K."/>
            <person name="Taylor K."/>
            <person name="Taylor R.G."/>
            <person name="Tivey A."/>
            <person name="Walsh S.V."/>
            <person name="Warren T."/>
            <person name="Whitehead S."/>
            <person name="Woodward J.R."/>
            <person name="Volckaert G."/>
            <person name="Aert R."/>
            <person name="Robben J."/>
            <person name="Grymonprez B."/>
            <person name="Weltjens I."/>
            <person name="Vanstreels E."/>
            <person name="Rieger M."/>
            <person name="Schaefer M."/>
            <person name="Mueller-Auer S."/>
            <person name="Gabel C."/>
            <person name="Fuchs M."/>
            <person name="Duesterhoeft A."/>
            <person name="Fritzc C."/>
            <person name="Holzer E."/>
            <person name="Moestl D."/>
            <person name="Hilbert H."/>
            <person name="Borzym K."/>
            <person name="Langer I."/>
            <person name="Beck A."/>
            <person name="Lehrach H."/>
            <person name="Reinhardt R."/>
            <person name="Pohl T.M."/>
            <person name="Eger P."/>
            <person name="Zimmermann W."/>
            <person name="Wedler H."/>
            <person name="Wambutt R."/>
            <person name="Purnelle B."/>
            <person name="Goffeau A."/>
            <person name="Cadieu E."/>
            <person name="Dreano S."/>
            <person name="Gloux S."/>
            <person name="Lelaure V."/>
            <person name="Mottier S."/>
            <person name="Galibert F."/>
            <person name="Aves S.J."/>
            <person name="Xiang Z."/>
            <person name="Hunt C."/>
            <person name="Moore K."/>
            <person name="Hurst S.M."/>
            <person name="Lucas M."/>
            <person name="Rochet M."/>
            <person name="Gaillardin C."/>
            <person name="Tallada V.A."/>
            <person name="Garzon A."/>
            <person name="Thode G."/>
            <person name="Daga R.R."/>
            <person name="Cruzado L."/>
            <person name="Jimenez J."/>
            <person name="Sanchez M."/>
            <person name="del Rey F."/>
            <person name="Benito J."/>
            <person name="Dominguez A."/>
            <person name="Revuelta J.L."/>
            <person name="Moreno S."/>
            <person name="Armstrong J."/>
            <person name="Forsburg S.L."/>
            <person name="Cerutti L."/>
            <person name="Lowe T."/>
            <person name="McCombie W.R."/>
            <person name="Paulsen I."/>
            <person name="Potashkin J."/>
            <person name="Shpakovski G.V."/>
            <person name="Ussery D."/>
            <person name="Barrell B.G."/>
            <person name="Nurse P."/>
        </authorList>
    </citation>
    <scope>NUCLEOTIDE SEQUENCE [LARGE SCALE GENOMIC DNA]</scope>
    <source>
        <strain>972 / ATCC 24843</strain>
    </source>
</reference>